<gene>
    <name evidence="1" type="primary">argJ</name>
    <name type="ordered locus">BL1063</name>
</gene>
<proteinExistence type="inferred from homology"/>
<accession>Q8G5F0</accession>
<reference key="1">
    <citation type="journal article" date="2002" name="Proc. Natl. Acad. Sci. U.S.A.">
        <title>The genome sequence of Bifidobacterium longum reflects its adaptation to the human gastrointestinal tract.</title>
        <authorList>
            <person name="Schell M.A."/>
            <person name="Karmirantzou M."/>
            <person name="Snel B."/>
            <person name="Vilanova D."/>
            <person name="Berger B."/>
            <person name="Pessi G."/>
            <person name="Zwahlen M.-C."/>
            <person name="Desiere F."/>
            <person name="Bork P."/>
            <person name="Delley M."/>
            <person name="Pridmore R.D."/>
            <person name="Arigoni F."/>
        </authorList>
    </citation>
    <scope>NUCLEOTIDE SEQUENCE [LARGE SCALE GENOMIC DNA]</scope>
    <source>
        <strain>NCC 2705</strain>
    </source>
</reference>
<comment type="function">
    <text evidence="1">Catalyzes two activities which are involved in the cyclic version of arginine biosynthesis: the synthesis of N-acetylglutamate from glutamate and acetyl-CoA as the acetyl donor, and of ornithine by transacetylation between N(2)-acetylornithine and glutamate.</text>
</comment>
<comment type="catalytic activity">
    <reaction evidence="1">
        <text>N(2)-acetyl-L-ornithine + L-glutamate = N-acetyl-L-glutamate + L-ornithine</text>
        <dbReference type="Rhea" id="RHEA:15349"/>
        <dbReference type="ChEBI" id="CHEBI:29985"/>
        <dbReference type="ChEBI" id="CHEBI:44337"/>
        <dbReference type="ChEBI" id="CHEBI:46911"/>
        <dbReference type="ChEBI" id="CHEBI:57805"/>
        <dbReference type="EC" id="2.3.1.35"/>
    </reaction>
</comment>
<comment type="catalytic activity">
    <reaction evidence="1">
        <text>L-glutamate + acetyl-CoA = N-acetyl-L-glutamate + CoA + H(+)</text>
        <dbReference type="Rhea" id="RHEA:24292"/>
        <dbReference type="ChEBI" id="CHEBI:15378"/>
        <dbReference type="ChEBI" id="CHEBI:29985"/>
        <dbReference type="ChEBI" id="CHEBI:44337"/>
        <dbReference type="ChEBI" id="CHEBI:57287"/>
        <dbReference type="ChEBI" id="CHEBI:57288"/>
        <dbReference type="EC" id="2.3.1.1"/>
    </reaction>
</comment>
<comment type="pathway">
    <text evidence="1">Amino-acid biosynthesis; L-arginine biosynthesis; L-ornithine and N-acetyl-L-glutamate from L-glutamate and N(2)-acetyl-L-ornithine (cyclic): step 1/1.</text>
</comment>
<comment type="pathway">
    <text evidence="1">Amino-acid biosynthesis; L-arginine biosynthesis; N(2)-acetyl-L-ornithine from L-glutamate: step 1/4.</text>
</comment>
<comment type="subunit">
    <text evidence="1">Heterotetramer of two alpha and two beta chains.</text>
</comment>
<comment type="subcellular location">
    <subcellularLocation>
        <location evidence="1">Cytoplasm</location>
    </subcellularLocation>
</comment>
<comment type="similarity">
    <text evidence="1">Belongs to the ArgJ family.</text>
</comment>
<dbReference type="EC" id="2.3.1.35" evidence="1"/>
<dbReference type="EC" id="2.3.1.1" evidence="1"/>
<dbReference type="EMBL" id="AE014295">
    <property type="protein sequence ID" value="AAN24871.1"/>
    <property type="molecule type" value="Genomic_DNA"/>
</dbReference>
<dbReference type="RefSeq" id="NP_696235.1">
    <property type="nucleotide sequence ID" value="NC_004307.2"/>
</dbReference>
<dbReference type="RefSeq" id="WP_011068278.1">
    <property type="nucleotide sequence ID" value="NC_004307.2"/>
</dbReference>
<dbReference type="SMR" id="Q8G5F0"/>
<dbReference type="STRING" id="206672.BL1063"/>
<dbReference type="EnsemblBacteria" id="AAN24871">
    <property type="protein sequence ID" value="AAN24871"/>
    <property type="gene ID" value="BL1063"/>
</dbReference>
<dbReference type="KEGG" id="blo:BL1063"/>
<dbReference type="PATRIC" id="fig|206672.9.peg.770"/>
<dbReference type="HOGENOM" id="CLU_027172_2_0_11"/>
<dbReference type="OrthoDB" id="9804242at2"/>
<dbReference type="PhylomeDB" id="Q8G5F0"/>
<dbReference type="UniPathway" id="UPA00068">
    <property type="reaction ID" value="UER00106"/>
</dbReference>
<dbReference type="UniPathway" id="UPA00068">
    <property type="reaction ID" value="UER00111"/>
</dbReference>
<dbReference type="Proteomes" id="UP000000439">
    <property type="component" value="Chromosome"/>
</dbReference>
<dbReference type="GO" id="GO:0005737">
    <property type="term" value="C:cytoplasm"/>
    <property type="evidence" value="ECO:0007669"/>
    <property type="project" value="UniProtKB-SubCell"/>
</dbReference>
<dbReference type="GO" id="GO:0004358">
    <property type="term" value="F:glutamate N-acetyltransferase activity"/>
    <property type="evidence" value="ECO:0007669"/>
    <property type="project" value="UniProtKB-UniRule"/>
</dbReference>
<dbReference type="GO" id="GO:0004042">
    <property type="term" value="F:L-glutamate N-acetyltransferase activity"/>
    <property type="evidence" value="ECO:0007669"/>
    <property type="project" value="UniProtKB-UniRule"/>
</dbReference>
<dbReference type="GO" id="GO:0006526">
    <property type="term" value="P:L-arginine biosynthetic process"/>
    <property type="evidence" value="ECO:0007669"/>
    <property type="project" value="UniProtKB-UniRule"/>
</dbReference>
<dbReference type="GO" id="GO:0006592">
    <property type="term" value="P:ornithine biosynthetic process"/>
    <property type="evidence" value="ECO:0007669"/>
    <property type="project" value="TreeGrafter"/>
</dbReference>
<dbReference type="CDD" id="cd02152">
    <property type="entry name" value="OAT"/>
    <property type="match status" value="1"/>
</dbReference>
<dbReference type="FunFam" id="3.10.20.340:FF:000003">
    <property type="entry name" value="Arginine biosynthesis bifunctional protein ArgJ"/>
    <property type="match status" value="1"/>
</dbReference>
<dbReference type="Gene3D" id="3.10.20.340">
    <property type="entry name" value="ArgJ beta chain, C-terminal domain"/>
    <property type="match status" value="1"/>
</dbReference>
<dbReference type="Gene3D" id="3.60.70.12">
    <property type="entry name" value="L-amino peptidase D-ALA esterase/amidase"/>
    <property type="match status" value="1"/>
</dbReference>
<dbReference type="HAMAP" id="MF_01106">
    <property type="entry name" value="ArgJ"/>
    <property type="match status" value="1"/>
</dbReference>
<dbReference type="InterPro" id="IPR002813">
    <property type="entry name" value="Arg_biosynth_ArgJ"/>
</dbReference>
<dbReference type="InterPro" id="IPR016117">
    <property type="entry name" value="ArgJ-like_dom_sf"/>
</dbReference>
<dbReference type="InterPro" id="IPR042195">
    <property type="entry name" value="ArgJ_beta_C"/>
</dbReference>
<dbReference type="NCBIfam" id="TIGR00120">
    <property type="entry name" value="ArgJ"/>
    <property type="match status" value="1"/>
</dbReference>
<dbReference type="NCBIfam" id="NF003802">
    <property type="entry name" value="PRK05388.1"/>
    <property type="match status" value="1"/>
</dbReference>
<dbReference type="PANTHER" id="PTHR23100">
    <property type="entry name" value="ARGININE BIOSYNTHESIS BIFUNCTIONAL PROTEIN ARGJ"/>
    <property type="match status" value="1"/>
</dbReference>
<dbReference type="PANTHER" id="PTHR23100:SF0">
    <property type="entry name" value="ARGININE BIOSYNTHESIS BIFUNCTIONAL PROTEIN ARGJ, MITOCHONDRIAL"/>
    <property type="match status" value="1"/>
</dbReference>
<dbReference type="Pfam" id="PF01960">
    <property type="entry name" value="ArgJ"/>
    <property type="match status" value="1"/>
</dbReference>
<dbReference type="SUPFAM" id="SSF56266">
    <property type="entry name" value="DmpA/ArgJ-like"/>
    <property type="match status" value="1"/>
</dbReference>
<feature type="chain" id="PRO_0000002127" description="Arginine biosynthesis bifunctional protein ArgJ alpha chain" evidence="1">
    <location>
        <begin position="1"/>
        <end position="182"/>
    </location>
</feature>
<feature type="chain" id="PRO_0000002128" description="Arginine biosynthesis bifunctional protein ArgJ beta chain" evidence="1">
    <location>
        <begin position="183"/>
        <end position="391"/>
    </location>
</feature>
<feature type="active site" description="Nucleophile" evidence="1">
    <location>
        <position position="183"/>
    </location>
</feature>
<feature type="binding site" evidence="1">
    <location>
        <position position="149"/>
    </location>
    <ligand>
        <name>substrate</name>
    </ligand>
</feature>
<feature type="binding site" evidence="1">
    <location>
        <position position="172"/>
    </location>
    <ligand>
        <name>substrate</name>
    </ligand>
</feature>
<feature type="binding site" evidence="1">
    <location>
        <position position="183"/>
    </location>
    <ligand>
        <name>substrate</name>
    </ligand>
</feature>
<feature type="binding site" evidence="1">
    <location>
        <position position="263"/>
    </location>
    <ligand>
        <name>substrate</name>
    </ligand>
</feature>
<feature type="binding site" evidence="1">
    <location>
        <position position="386"/>
    </location>
    <ligand>
        <name>substrate</name>
    </ligand>
</feature>
<feature type="binding site" evidence="1">
    <location>
        <position position="391"/>
    </location>
    <ligand>
        <name>substrate</name>
    </ligand>
</feature>
<feature type="site" description="Involved in the stabilization of negative charge on the oxyanion by the formation of the oxyanion hole" evidence="1">
    <location>
        <position position="110"/>
    </location>
</feature>
<feature type="site" description="Involved in the stabilization of negative charge on the oxyanion by the formation of the oxyanion hole" evidence="1">
    <location>
        <position position="111"/>
    </location>
</feature>
<feature type="site" description="Cleavage; by autolysis" evidence="1">
    <location>
        <begin position="182"/>
        <end position="183"/>
    </location>
</feature>
<protein>
    <recommendedName>
        <fullName evidence="1">Arginine biosynthesis bifunctional protein ArgJ</fullName>
    </recommendedName>
    <domain>
        <recommendedName>
            <fullName evidence="1">Glutamate N-acetyltransferase</fullName>
            <ecNumber evidence="1">2.3.1.35</ecNumber>
        </recommendedName>
        <alternativeName>
            <fullName evidence="1">Ornithine acetyltransferase</fullName>
            <shortName evidence="1">OATase</shortName>
        </alternativeName>
        <alternativeName>
            <fullName evidence="1">Ornithine transacetylase</fullName>
        </alternativeName>
    </domain>
    <domain>
        <recommendedName>
            <fullName evidence="1">Amino-acid acetyltransferase</fullName>
            <ecNumber evidence="1">2.3.1.1</ecNumber>
        </recommendedName>
        <alternativeName>
            <fullName evidence="1">N-acetylglutamate synthase</fullName>
            <shortName evidence="1">AGSase</shortName>
        </alternativeName>
    </domain>
    <component>
        <recommendedName>
            <fullName evidence="1">Arginine biosynthesis bifunctional protein ArgJ alpha chain</fullName>
        </recommendedName>
    </component>
    <component>
        <recommendedName>
            <fullName evidence="1">Arginine biosynthesis bifunctional protein ArgJ beta chain</fullName>
        </recommendedName>
    </component>
</protein>
<sequence length="391" mass="39855">MSVTFAQGFSAAGVAAGISSVEGKKDLALVVNNGPLDAAAGVFTSNRFCAAPVQWSRKVVADGHVKAVILNSGGANACTGEAGYAQSVATAETVAGLIGAEPNDVAVCSTGLIGELLPLDNVLAGAKSAHEALAATAEAGTDASHAIMTTDTKPKTVELTGSNGWKIGGMVKGSGMIAPQLATMLCVITTDAVVSAGQMQAALAVAAEHSFNRIDVDGCMSTNDTVLLLASGASGIEPDKDEFNKLVREACASLSRQIIGDGEGASHDIRITVTGATSEDAALACGRAVAASNLLKCAISGNDPNWGRIVSSLGTVPPEVAPYDSNKVTVDVNGVRICENGGAGRDRSEVDMTPREVHIDIDLNTGSDAEATVWTDDLTHEYVHINADYES</sequence>
<keyword id="KW-0012">Acyltransferase</keyword>
<keyword id="KW-0028">Amino-acid biosynthesis</keyword>
<keyword id="KW-0055">Arginine biosynthesis</keyword>
<keyword id="KW-0068">Autocatalytic cleavage</keyword>
<keyword id="KW-0963">Cytoplasm</keyword>
<keyword id="KW-0511">Multifunctional enzyme</keyword>
<keyword id="KW-1185">Reference proteome</keyword>
<keyword id="KW-0808">Transferase</keyword>
<name>ARGJ_BIFLO</name>
<evidence type="ECO:0000255" key="1">
    <source>
        <dbReference type="HAMAP-Rule" id="MF_01106"/>
    </source>
</evidence>
<organism>
    <name type="scientific">Bifidobacterium longum (strain NCC 2705)</name>
    <dbReference type="NCBI Taxonomy" id="206672"/>
    <lineage>
        <taxon>Bacteria</taxon>
        <taxon>Bacillati</taxon>
        <taxon>Actinomycetota</taxon>
        <taxon>Actinomycetes</taxon>
        <taxon>Bifidobacteriales</taxon>
        <taxon>Bifidobacteriaceae</taxon>
        <taxon>Bifidobacterium</taxon>
    </lineage>
</organism>